<evidence type="ECO:0000250" key="1">
    <source>
        <dbReference type="UniProtKB" id="P21673"/>
    </source>
</evidence>
<evidence type="ECO:0000255" key="2">
    <source>
        <dbReference type="PROSITE-ProRule" id="PRU00532"/>
    </source>
</evidence>
<evidence type="ECO:0000269" key="3">
    <source>
    </source>
</evidence>
<evidence type="ECO:0000303" key="4">
    <source>
    </source>
</evidence>
<evidence type="ECO:0000305" key="5"/>
<evidence type="ECO:0000312" key="6">
    <source>
        <dbReference type="WormBase" id="D2023.4"/>
    </source>
</evidence>
<proteinExistence type="evidence at protein level"/>
<keyword id="KW-0012">Acyltransferase</keyword>
<keyword id="KW-1185">Reference proteome</keyword>
<keyword id="KW-0808">Transferase</keyword>
<feature type="chain" id="PRO_0000451288" description="Thialysine N-epsilon-acetyltransferase">
    <location>
        <begin position="1"/>
        <end position="160"/>
    </location>
</feature>
<feature type="domain" description="N-acetyltransferase" evidence="2">
    <location>
        <begin position="4"/>
        <end position="159"/>
    </location>
</feature>
<feature type="binding site" evidence="1">
    <location>
        <begin position="84"/>
        <end position="86"/>
    </location>
    <ligand>
        <name>acetyl-CoA</name>
        <dbReference type="ChEBI" id="CHEBI:57288"/>
    </ligand>
</feature>
<feature type="binding site" evidence="1">
    <location>
        <begin position="92"/>
        <end position="97"/>
    </location>
    <ligand>
        <name>acetyl-CoA</name>
        <dbReference type="ChEBI" id="CHEBI:57288"/>
    </ligand>
</feature>
<feature type="binding site" evidence="1">
    <location>
        <begin position="123"/>
        <end position="126"/>
    </location>
    <ligand>
        <name>acetyl-CoA</name>
        <dbReference type="ChEBI" id="CHEBI:57288"/>
    </ligand>
</feature>
<feature type="binding site" evidence="1">
    <location>
        <begin position="130"/>
        <end position="133"/>
    </location>
    <ligand>
        <name>acetyl-CoA</name>
        <dbReference type="ChEBI" id="CHEBI:57288"/>
    </ligand>
</feature>
<gene>
    <name evidence="6" type="ORF">D2023.4</name>
</gene>
<dbReference type="EC" id="2.3.1.-" evidence="3"/>
<dbReference type="EMBL" id="BX284605">
    <property type="protein sequence ID" value="CAB02871.1"/>
    <property type="molecule type" value="Genomic_DNA"/>
</dbReference>
<dbReference type="PIR" id="T20345">
    <property type="entry name" value="T20345"/>
</dbReference>
<dbReference type="RefSeq" id="NP_505978.1">
    <property type="nucleotide sequence ID" value="NM_073577.7"/>
</dbReference>
<dbReference type="SMR" id="O17731"/>
<dbReference type="DIP" id="DIP-27428N"/>
<dbReference type="FunCoup" id="O17731">
    <property type="interactions" value="625"/>
</dbReference>
<dbReference type="STRING" id="6239.D2023.4.1"/>
<dbReference type="PaxDb" id="6239-D2023.4"/>
<dbReference type="PeptideAtlas" id="O17731"/>
<dbReference type="EnsemblMetazoa" id="D2023.4.1">
    <property type="protein sequence ID" value="D2023.4.1"/>
    <property type="gene ID" value="WBGene00008408"/>
</dbReference>
<dbReference type="GeneID" id="183946"/>
<dbReference type="KEGG" id="cel:CELE_D2023.4"/>
<dbReference type="UCSC" id="D2023.4.1">
    <property type="organism name" value="c. elegans"/>
</dbReference>
<dbReference type="AGR" id="WB:WBGene00008408"/>
<dbReference type="CTD" id="183946"/>
<dbReference type="WormBase" id="D2023.4">
    <property type="protein sequence ID" value="CE09074"/>
    <property type="gene ID" value="WBGene00008408"/>
</dbReference>
<dbReference type="eggNOG" id="KOG3216">
    <property type="taxonomic scope" value="Eukaryota"/>
</dbReference>
<dbReference type="GeneTree" id="ENSGT00950000183121"/>
<dbReference type="HOGENOM" id="CLU_013985_41_2_1"/>
<dbReference type="InParanoid" id="O17731"/>
<dbReference type="OMA" id="WQFYRVE"/>
<dbReference type="OrthoDB" id="7305308at2759"/>
<dbReference type="PhylomeDB" id="O17731"/>
<dbReference type="Reactome" id="R-CEL-351200">
    <property type="pathway name" value="Interconversion of polyamines"/>
</dbReference>
<dbReference type="PRO" id="PR:O17731"/>
<dbReference type="Proteomes" id="UP000001940">
    <property type="component" value="Chromosome V"/>
</dbReference>
<dbReference type="Bgee" id="WBGene00008408">
    <property type="expression patterns" value="Expressed in germ line (C elegans) and 4 other cell types or tissues"/>
</dbReference>
<dbReference type="GO" id="GO:0008080">
    <property type="term" value="F:N-acetyltransferase activity"/>
    <property type="evidence" value="ECO:0000314"/>
    <property type="project" value="UniProtKB"/>
</dbReference>
<dbReference type="CDD" id="cd04301">
    <property type="entry name" value="NAT_SF"/>
    <property type="match status" value="1"/>
</dbReference>
<dbReference type="FunFam" id="3.40.630.30:FF:000064">
    <property type="entry name" value="GNAT family acetyltransferase"/>
    <property type="match status" value="1"/>
</dbReference>
<dbReference type="Gene3D" id="3.40.630.30">
    <property type="match status" value="1"/>
</dbReference>
<dbReference type="InterPro" id="IPR016181">
    <property type="entry name" value="Acyl_CoA_acyltransferase"/>
</dbReference>
<dbReference type="InterPro" id="IPR051016">
    <property type="entry name" value="Diverse_Substrate_AcTransf"/>
</dbReference>
<dbReference type="InterPro" id="IPR000182">
    <property type="entry name" value="GNAT_dom"/>
</dbReference>
<dbReference type="PANTHER" id="PTHR10545">
    <property type="entry name" value="DIAMINE N-ACETYLTRANSFERASE"/>
    <property type="match status" value="1"/>
</dbReference>
<dbReference type="PANTHER" id="PTHR10545:SF29">
    <property type="entry name" value="GH14572P-RELATED"/>
    <property type="match status" value="1"/>
</dbReference>
<dbReference type="Pfam" id="PF00583">
    <property type="entry name" value="Acetyltransf_1"/>
    <property type="match status" value="1"/>
</dbReference>
<dbReference type="SUPFAM" id="SSF55729">
    <property type="entry name" value="Acyl-CoA N-acyltransferases (Nat)"/>
    <property type="match status" value="1"/>
</dbReference>
<dbReference type="PROSITE" id="PS51186">
    <property type="entry name" value="GNAT"/>
    <property type="match status" value="1"/>
</dbReference>
<comment type="function">
    <text evidence="3">Catalyzes the N-acetylation of the amino acid thialysine (S-(2-aminoethyl)-L-cysteine), a L-lysine analog with the 4-methylene group substituted with a sulfur (PubMed:15283700). Substrate specificity: thialysine &gt; O-(2-aminoethyl)-L-serine &gt; S-(2-aminoethyl)-D,L-homocysteine (PubMed:15283700). Does not act on polyamines, such as spermidine and spermine, nor on diamines putrescine and cadaverine (PubMed:15283700).</text>
</comment>
<comment type="catalytic activity">
    <reaction evidence="3">
        <text>S-(2-aminoethyl)-L-cysteine + acetyl-CoA = S-(2-acetamidoethyl)-L-cysteine + CoA + H(+)</text>
        <dbReference type="Rhea" id="RHEA:64804"/>
        <dbReference type="ChEBI" id="CHEBI:15378"/>
        <dbReference type="ChEBI" id="CHEBI:57287"/>
        <dbReference type="ChEBI" id="CHEBI:57288"/>
        <dbReference type="ChEBI" id="CHEBI:156132"/>
        <dbReference type="ChEBI" id="CHEBI:156134"/>
    </reaction>
    <physiologicalReaction direction="left-to-right" evidence="3">
        <dbReference type="Rhea" id="RHEA:64805"/>
    </physiologicalReaction>
</comment>
<comment type="catalytic activity">
    <reaction evidence="3">
        <text>O-(2-aminoethyl)-L-serine + acetyl-CoA = O-(2-acetamidoethyl)-L-serine + CoA + H(+)</text>
        <dbReference type="Rhea" id="RHEA:64808"/>
        <dbReference type="ChEBI" id="CHEBI:15378"/>
        <dbReference type="ChEBI" id="CHEBI:57287"/>
        <dbReference type="ChEBI" id="CHEBI:57288"/>
        <dbReference type="ChEBI" id="CHEBI:156137"/>
        <dbReference type="ChEBI" id="CHEBI:156138"/>
    </reaction>
    <physiologicalReaction direction="left-to-right" evidence="3">
        <dbReference type="Rhea" id="RHEA:64809"/>
    </physiologicalReaction>
</comment>
<comment type="catalytic activity">
    <reaction evidence="3">
        <text>S-(2-aminoethyl)-homocysteine + acetyl-CoA = S-(2-acetamidoethyl)-homocysteine + CoA + H(+)</text>
        <dbReference type="Rhea" id="RHEA:64812"/>
        <dbReference type="ChEBI" id="CHEBI:15378"/>
        <dbReference type="ChEBI" id="CHEBI:57287"/>
        <dbReference type="ChEBI" id="CHEBI:57288"/>
        <dbReference type="ChEBI" id="CHEBI:156135"/>
        <dbReference type="ChEBI" id="CHEBI:156136"/>
    </reaction>
    <physiologicalReaction direction="left-to-right" evidence="3">
        <dbReference type="Rhea" id="RHEA:64813"/>
    </physiologicalReaction>
</comment>
<comment type="biophysicochemical properties">
    <kinetics>
        <KM evidence="3">0.18 mM for thialysine (S-(2-aminoethyl)-L-cysteine)</KM>
        <KM evidence="3">0.56 mM for O-(2-aminoethyl)-L-serine</KM>
        <KM evidence="3">3.7 mM for S-(2-aminoethyl)-D,L-homocysteine</KM>
        <KM evidence="3">6.7 mM for L-lysine</KM>
        <KM evidence="3">1.6 mM for ethylenediamine</KM>
        <KM evidence="3">12.4 mM for diaminopropane</KM>
        <KM evidence="3">5.5 mM for spermidine</KM>
        <text evidence="3">kcat is 38.5 sec(-1) with thialysine (S-(2-aminoethyl)-L-cysteine) as substrate (PubMed:15283700). kcat is 48.9 sec(-1) with O-(2-aminoethyl)-L-serine as substrate (PubMed:15283700). kcat is 27.7 sec(-1) with S-(2-aminoethyl)-D,L-homocysteine as substrate (PubMed:15283700). kcat is 1.4 sec(-1) with L-lysine as substrate (PubMed:15283700). kcat is 5.8 sec(-1) with ethylenediamine as substrate (PubMed:15283700). kcat is 1.2 sec(-1) with diaminopropane as substrate (PubMed:15283700). kcat is 0.14 sec(-1) with spermidine as substrate (PubMed:15283700).</text>
    </kinetics>
</comment>
<comment type="subunit">
    <text evidence="3">Homodimer.</text>
</comment>
<comment type="similarity">
    <text evidence="5">Belongs to the acetyltransferase family.</text>
</comment>
<reference key="1">
    <citation type="journal article" date="1998" name="Science">
        <title>Genome sequence of the nematode C. elegans: a platform for investigating biology.</title>
        <authorList>
            <consortium name="The C. elegans sequencing consortium"/>
        </authorList>
    </citation>
    <scope>NUCLEOTIDE SEQUENCE [LARGE SCALE GENOMIC DNA]</scope>
    <source>
        <strain>Bristol N2</strain>
    </source>
</reference>
<reference key="2">
    <citation type="journal article" date="2004" name="Biochem. J.">
        <title>A novel member of the GCN5-related N-acetyltransferase superfamily from Caenorhabditis elegans preferentially catalyses the N-acetylation of thialysine [S-(2-aminoethyl)-L-cysteine].</title>
        <authorList>
            <person name="Abo-Dalo B."/>
            <person name="Ndjonka D."/>
            <person name="Pinnen F."/>
            <person name="Liebau E."/>
            <person name="Lueersen K."/>
        </authorList>
    </citation>
    <scope>FUNCTION</scope>
    <scope>CATALYTIC ACTIVITY</scope>
    <scope>BIOPHYSICOCHEMICAL PROPERTIES</scope>
    <scope>SUBUNIT</scope>
</reference>
<organism>
    <name type="scientific">Caenorhabditis elegans</name>
    <dbReference type="NCBI Taxonomy" id="6239"/>
    <lineage>
        <taxon>Eukaryota</taxon>
        <taxon>Metazoa</taxon>
        <taxon>Ecdysozoa</taxon>
        <taxon>Nematoda</taxon>
        <taxon>Chromadorea</taxon>
        <taxon>Rhabditida</taxon>
        <taxon>Rhabditina</taxon>
        <taxon>Rhabditomorpha</taxon>
        <taxon>Rhabditoidea</taxon>
        <taxon>Rhabditidae</taxon>
        <taxon>Peloderinae</taxon>
        <taxon>Caenorhabditis</taxon>
    </lineage>
</organism>
<sequence length="160" mass="18647">MKNFEIVTVTPDHAEQLISMIHELAEFEKMKSSVVNTAEKLRKDIENKAVHGFIAFIGEEPAGMNLFYYAYSTWVGQYLHMEDLYIRPQFRRMGLARTLWKKLAELARDKGIVRLEWAVLDWNKNAIALYDTVDYVNLTKSEGWFTFRMDGAAINKFADE</sequence>
<name>SAT_CAEEL</name>
<accession>O17731</accession>
<protein>
    <recommendedName>
        <fullName evidence="4">Thialysine N-epsilon-acetyltransferase</fullName>
        <ecNumber evidence="3">2.3.1.-</ecNumber>
    </recommendedName>
</protein>